<organism>
    <name type="scientific">Oryza sativa subsp. japonica</name>
    <name type="common">Rice</name>
    <dbReference type="NCBI Taxonomy" id="39947"/>
    <lineage>
        <taxon>Eukaryota</taxon>
        <taxon>Viridiplantae</taxon>
        <taxon>Streptophyta</taxon>
        <taxon>Embryophyta</taxon>
        <taxon>Tracheophyta</taxon>
        <taxon>Spermatophyta</taxon>
        <taxon>Magnoliopsida</taxon>
        <taxon>Liliopsida</taxon>
        <taxon>Poales</taxon>
        <taxon>Poaceae</taxon>
        <taxon>BOP clade</taxon>
        <taxon>Oryzoideae</taxon>
        <taxon>Oryzeae</taxon>
        <taxon>Oryzinae</taxon>
        <taxon>Oryza</taxon>
        <taxon>Oryza sativa</taxon>
    </lineage>
</organism>
<gene>
    <name type="ordered locus">Os05g0129200</name>
    <name type="ordered locus">LOC_Os05g03840</name>
    <name type="ORF">OsJ_016234</name>
</gene>
<sequence length="512" mass="54229">MLAAAIELVVIATSCMVRDAHGHDYRAALAMSLLYFEGQRSGRLPPAQRVQWRADSALADGADHRVPDLASPPSSNVSVCARTDAMQCDMQVDLTGGYYDSGDNVKFGFPMAFTVAALSWSVVEYGDRLDAAGELGHALDAVRWGADYLTRAHASAGGGEALYVQVGDGDSDHSCWQRPENMDTPRTAYMVNASSPGSDIAAETAAALASAADANFSSTLLLHAKQLFEFAKNHRGLYHNSVPSAAKFYASSGDEDELLWAAAWLYIATGGEEEYSAYIAGATNVGGVRSMFSWDDKFVGAQALLVLQGKLPADGSHAEMKTNLEQFICNLVQHSGGNGGGGGGARLSPGGMLWWDSWNNMQYVTLASLVLAVHADHLTAARSASLQCGGGASRSPAQLTAFVRSQVDYILGSNPETMSYMVGYGSRYPAEVHHRAASLPSIKSSPAKVTCKGGFDYLNKGSPDPNVIAGAIVGGPDADDRYDDSRQNFRQAEPSTVTVAPIVGILARLLPS</sequence>
<comment type="catalytic activity">
    <reaction>
        <text>Endohydrolysis of (1-&gt;4)-beta-D-glucosidic linkages in cellulose, lichenin and cereal beta-D-glucans.</text>
        <dbReference type="EC" id="3.2.1.4"/>
    </reaction>
</comment>
<comment type="subcellular location">
    <subcellularLocation>
        <location evidence="1">Secreted</location>
    </subcellularLocation>
</comment>
<comment type="similarity">
    <text evidence="4 5">Belongs to the glycosyl hydrolase 9 (cellulase E) family.</text>
</comment>
<reference key="1">
    <citation type="journal article" date="2005" name="Nature">
        <title>The map-based sequence of the rice genome.</title>
        <authorList>
            <consortium name="International rice genome sequencing project (IRGSP)"/>
        </authorList>
    </citation>
    <scope>NUCLEOTIDE SEQUENCE [LARGE SCALE GENOMIC DNA]</scope>
    <source>
        <strain>cv. Nipponbare</strain>
    </source>
</reference>
<reference key="2">
    <citation type="journal article" date="2008" name="Nucleic Acids Res.">
        <title>The rice annotation project database (RAP-DB): 2008 update.</title>
        <authorList>
            <consortium name="The rice annotation project (RAP)"/>
        </authorList>
    </citation>
    <scope>GENOME REANNOTATION</scope>
    <source>
        <strain>cv. Nipponbare</strain>
    </source>
</reference>
<reference key="3">
    <citation type="journal article" date="2013" name="Rice">
        <title>Improvement of the Oryza sativa Nipponbare reference genome using next generation sequence and optical map data.</title>
        <authorList>
            <person name="Kawahara Y."/>
            <person name="de la Bastide M."/>
            <person name="Hamilton J.P."/>
            <person name="Kanamori H."/>
            <person name="McCombie W.R."/>
            <person name="Ouyang S."/>
            <person name="Schwartz D.C."/>
            <person name="Tanaka T."/>
            <person name="Wu J."/>
            <person name="Zhou S."/>
            <person name="Childs K.L."/>
            <person name="Davidson R.M."/>
            <person name="Lin H."/>
            <person name="Quesada-Ocampo L."/>
            <person name="Vaillancourt B."/>
            <person name="Sakai H."/>
            <person name="Lee S.S."/>
            <person name="Kim J."/>
            <person name="Numa H."/>
            <person name="Itoh T."/>
            <person name="Buell C.R."/>
            <person name="Matsumoto T."/>
        </authorList>
    </citation>
    <scope>GENOME REANNOTATION</scope>
    <source>
        <strain>cv. Nipponbare</strain>
    </source>
</reference>
<reference key="4">
    <citation type="journal article" date="2005" name="PLoS Biol.">
        <title>The genomes of Oryza sativa: a history of duplications.</title>
        <authorList>
            <person name="Yu J."/>
            <person name="Wang J."/>
            <person name="Lin W."/>
            <person name="Li S."/>
            <person name="Li H."/>
            <person name="Zhou J."/>
            <person name="Ni P."/>
            <person name="Dong W."/>
            <person name="Hu S."/>
            <person name="Zeng C."/>
            <person name="Zhang J."/>
            <person name="Zhang Y."/>
            <person name="Li R."/>
            <person name="Xu Z."/>
            <person name="Li S."/>
            <person name="Li X."/>
            <person name="Zheng H."/>
            <person name="Cong L."/>
            <person name="Lin L."/>
            <person name="Yin J."/>
            <person name="Geng J."/>
            <person name="Li G."/>
            <person name="Shi J."/>
            <person name="Liu J."/>
            <person name="Lv H."/>
            <person name="Li J."/>
            <person name="Wang J."/>
            <person name="Deng Y."/>
            <person name="Ran L."/>
            <person name="Shi X."/>
            <person name="Wang X."/>
            <person name="Wu Q."/>
            <person name="Li C."/>
            <person name="Ren X."/>
            <person name="Wang J."/>
            <person name="Wang X."/>
            <person name="Li D."/>
            <person name="Liu D."/>
            <person name="Zhang X."/>
            <person name="Ji Z."/>
            <person name="Zhao W."/>
            <person name="Sun Y."/>
            <person name="Zhang Z."/>
            <person name="Bao J."/>
            <person name="Han Y."/>
            <person name="Dong L."/>
            <person name="Ji J."/>
            <person name="Chen P."/>
            <person name="Wu S."/>
            <person name="Liu J."/>
            <person name="Xiao Y."/>
            <person name="Bu D."/>
            <person name="Tan J."/>
            <person name="Yang L."/>
            <person name="Ye C."/>
            <person name="Zhang J."/>
            <person name="Xu J."/>
            <person name="Zhou Y."/>
            <person name="Yu Y."/>
            <person name="Zhang B."/>
            <person name="Zhuang S."/>
            <person name="Wei H."/>
            <person name="Liu B."/>
            <person name="Lei M."/>
            <person name="Yu H."/>
            <person name="Li Y."/>
            <person name="Xu H."/>
            <person name="Wei S."/>
            <person name="He X."/>
            <person name="Fang L."/>
            <person name="Zhang Z."/>
            <person name="Zhang Y."/>
            <person name="Huang X."/>
            <person name="Su Z."/>
            <person name="Tong W."/>
            <person name="Li J."/>
            <person name="Tong Z."/>
            <person name="Li S."/>
            <person name="Ye J."/>
            <person name="Wang L."/>
            <person name="Fang L."/>
            <person name="Lei T."/>
            <person name="Chen C.-S."/>
            <person name="Chen H.-C."/>
            <person name="Xu Z."/>
            <person name="Li H."/>
            <person name="Huang H."/>
            <person name="Zhang F."/>
            <person name="Xu H."/>
            <person name="Li N."/>
            <person name="Zhao C."/>
            <person name="Li S."/>
            <person name="Dong L."/>
            <person name="Huang Y."/>
            <person name="Li L."/>
            <person name="Xi Y."/>
            <person name="Qi Q."/>
            <person name="Li W."/>
            <person name="Zhang B."/>
            <person name="Hu W."/>
            <person name="Zhang Y."/>
            <person name="Tian X."/>
            <person name="Jiao Y."/>
            <person name="Liang X."/>
            <person name="Jin J."/>
            <person name="Gao L."/>
            <person name="Zheng W."/>
            <person name="Hao B."/>
            <person name="Liu S.-M."/>
            <person name="Wang W."/>
            <person name="Yuan L."/>
            <person name="Cao M."/>
            <person name="McDermott J."/>
            <person name="Samudrala R."/>
            <person name="Wang J."/>
            <person name="Wong G.K.-S."/>
            <person name="Yang H."/>
        </authorList>
    </citation>
    <scope>NUCLEOTIDE SEQUENCE [LARGE SCALE GENOMIC DNA]</scope>
    <source>
        <strain>cv. Nipponbare</strain>
    </source>
</reference>
<feature type="signal peptide" evidence="2">
    <location>
        <begin position="1"/>
        <end position="22"/>
    </location>
</feature>
<feature type="chain" id="PRO_0000249291" description="Endoglucanase 14">
    <location>
        <begin position="23"/>
        <end position="512"/>
    </location>
</feature>
<feature type="active site" description="Nucleophile" evidence="4">
    <location>
        <position position="103"/>
    </location>
</feature>
<feature type="active site" evidence="3">
    <location>
        <position position="433"/>
    </location>
</feature>
<feature type="active site" evidence="3">
    <location>
        <position position="484"/>
    </location>
</feature>
<feature type="active site" evidence="3">
    <location>
        <position position="493"/>
    </location>
</feature>
<feature type="glycosylation site" description="N-linked (GlcNAc...) asparagine" evidence="2">
    <location>
        <position position="76"/>
    </location>
</feature>
<feature type="glycosylation site" description="N-linked (GlcNAc...) asparagine" evidence="2">
    <location>
        <position position="192"/>
    </location>
</feature>
<feature type="glycosylation site" description="N-linked (GlcNAc...) asparagine" evidence="2">
    <location>
        <position position="215"/>
    </location>
</feature>
<keyword id="KW-0119">Carbohydrate metabolism</keyword>
<keyword id="KW-0961">Cell wall biogenesis/degradation</keyword>
<keyword id="KW-0136">Cellulose degradation</keyword>
<keyword id="KW-0325">Glycoprotein</keyword>
<keyword id="KW-0326">Glycosidase</keyword>
<keyword id="KW-0378">Hydrolase</keyword>
<keyword id="KW-0624">Polysaccharide degradation</keyword>
<keyword id="KW-1185">Reference proteome</keyword>
<keyword id="KW-0964">Secreted</keyword>
<keyword id="KW-0732">Signal</keyword>
<proteinExistence type="evidence at transcript level"/>
<evidence type="ECO:0000250" key="1"/>
<evidence type="ECO:0000255" key="2"/>
<evidence type="ECO:0000255" key="3">
    <source>
        <dbReference type="PROSITE-ProRule" id="PRU10059"/>
    </source>
</evidence>
<evidence type="ECO:0000255" key="4">
    <source>
        <dbReference type="PROSITE-ProRule" id="PRU10140"/>
    </source>
</evidence>
<evidence type="ECO:0000305" key="5"/>
<accession>P0C1U5</accession>
<accession>A0A0P0WHG5</accession>
<accession>Q0DL16</accession>
<name>GUN14_ORYSJ</name>
<protein>
    <recommendedName>
        <fullName>Endoglucanase 14</fullName>
        <ecNumber>3.2.1.4</ecNumber>
    </recommendedName>
    <alternativeName>
        <fullName>Endo-1,4-beta glucanase 14</fullName>
    </alternativeName>
</protein>
<dbReference type="EC" id="3.2.1.4"/>
<dbReference type="EMBL" id="AP008211">
    <property type="protein sequence ID" value="BAF16457.1"/>
    <property type="molecule type" value="Genomic_DNA"/>
</dbReference>
<dbReference type="EMBL" id="AP014961">
    <property type="protein sequence ID" value="BAS92100.1"/>
    <property type="molecule type" value="Genomic_DNA"/>
</dbReference>
<dbReference type="EMBL" id="CM000142">
    <property type="protein sequence ID" value="EEE62205.1"/>
    <property type="molecule type" value="Genomic_DNA"/>
</dbReference>
<dbReference type="SMR" id="P0C1U5"/>
<dbReference type="FunCoup" id="P0C1U5">
    <property type="interactions" value="20"/>
</dbReference>
<dbReference type="STRING" id="39947.P0C1U5"/>
<dbReference type="CAZy" id="GH9">
    <property type="family name" value="Glycoside Hydrolase Family 9"/>
</dbReference>
<dbReference type="PaxDb" id="39947-P0C1U5"/>
<dbReference type="EnsemblPlants" id="Os05t0129200-00">
    <property type="protein sequence ID" value="Os05t0129200-00"/>
    <property type="gene ID" value="Os05g0129200"/>
</dbReference>
<dbReference type="Gramene" id="Os05t0129200-00">
    <property type="protein sequence ID" value="Os05t0129200-00"/>
    <property type="gene ID" value="Os05g0129200"/>
</dbReference>
<dbReference type="KEGG" id="dosa:Os05g0129200"/>
<dbReference type="eggNOG" id="ENOG502QRF6">
    <property type="taxonomic scope" value="Eukaryota"/>
</dbReference>
<dbReference type="HOGENOM" id="CLU_008926_1_2_1"/>
<dbReference type="InParanoid" id="P0C1U5"/>
<dbReference type="OMA" id="EEYICSC"/>
<dbReference type="Proteomes" id="UP000000763">
    <property type="component" value="Chromosome 5"/>
</dbReference>
<dbReference type="Proteomes" id="UP000007752">
    <property type="component" value="Chromosome 5"/>
</dbReference>
<dbReference type="Proteomes" id="UP000059680">
    <property type="component" value="Chromosome 5"/>
</dbReference>
<dbReference type="GO" id="GO:0005576">
    <property type="term" value="C:extracellular region"/>
    <property type="evidence" value="ECO:0007669"/>
    <property type="project" value="UniProtKB-SubCell"/>
</dbReference>
<dbReference type="GO" id="GO:0008810">
    <property type="term" value="F:cellulase activity"/>
    <property type="evidence" value="ECO:0007669"/>
    <property type="project" value="UniProtKB-EC"/>
</dbReference>
<dbReference type="GO" id="GO:0071555">
    <property type="term" value="P:cell wall organization"/>
    <property type="evidence" value="ECO:0007669"/>
    <property type="project" value="UniProtKB-KW"/>
</dbReference>
<dbReference type="GO" id="GO:0030245">
    <property type="term" value="P:cellulose catabolic process"/>
    <property type="evidence" value="ECO:0007669"/>
    <property type="project" value="UniProtKB-KW"/>
</dbReference>
<dbReference type="Gene3D" id="1.50.10.10">
    <property type="match status" value="1"/>
</dbReference>
<dbReference type="InterPro" id="IPR008928">
    <property type="entry name" value="6-hairpin_glycosidase_sf"/>
</dbReference>
<dbReference type="InterPro" id="IPR012341">
    <property type="entry name" value="6hp_glycosidase-like_sf"/>
</dbReference>
<dbReference type="InterPro" id="IPR001701">
    <property type="entry name" value="Glyco_hydro_9"/>
</dbReference>
<dbReference type="InterPro" id="IPR018221">
    <property type="entry name" value="Glyco_hydro_9_His_AS"/>
</dbReference>
<dbReference type="PANTHER" id="PTHR22298">
    <property type="entry name" value="ENDO-1,4-BETA-GLUCANASE"/>
    <property type="match status" value="1"/>
</dbReference>
<dbReference type="Pfam" id="PF00759">
    <property type="entry name" value="Glyco_hydro_9"/>
    <property type="match status" value="1"/>
</dbReference>
<dbReference type="SUPFAM" id="SSF48208">
    <property type="entry name" value="Six-hairpin glycosidases"/>
    <property type="match status" value="1"/>
</dbReference>
<dbReference type="PROSITE" id="PS60032">
    <property type="entry name" value="GH9_1"/>
    <property type="match status" value="1"/>
</dbReference>
<dbReference type="PROSITE" id="PS00592">
    <property type="entry name" value="GH9_2"/>
    <property type="match status" value="1"/>
</dbReference>